<name>RIMO_PSEPK</name>
<evidence type="ECO:0000255" key="1">
    <source>
        <dbReference type="HAMAP-Rule" id="MF_01865"/>
    </source>
</evidence>
<evidence type="ECO:0000255" key="2">
    <source>
        <dbReference type="PROSITE-ProRule" id="PRU01266"/>
    </source>
</evidence>
<evidence type="ECO:0000305" key="3"/>
<organism>
    <name type="scientific">Pseudomonas putida (strain ATCC 47054 / DSM 6125 / CFBP 8728 / NCIMB 11950 / KT2440)</name>
    <dbReference type="NCBI Taxonomy" id="160488"/>
    <lineage>
        <taxon>Bacteria</taxon>
        <taxon>Pseudomonadati</taxon>
        <taxon>Pseudomonadota</taxon>
        <taxon>Gammaproteobacteria</taxon>
        <taxon>Pseudomonadales</taxon>
        <taxon>Pseudomonadaceae</taxon>
        <taxon>Pseudomonas</taxon>
    </lineage>
</organism>
<keyword id="KW-0004">4Fe-4S</keyword>
<keyword id="KW-0963">Cytoplasm</keyword>
<keyword id="KW-0408">Iron</keyword>
<keyword id="KW-0411">Iron-sulfur</keyword>
<keyword id="KW-0479">Metal-binding</keyword>
<keyword id="KW-1185">Reference proteome</keyword>
<keyword id="KW-0949">S-adenosyl-L-methionine</keyword>
<keyword id="KW-0808">Transferase</keyword>
<gene>
    <name evidence="1" type="primary">rimO</name>
    <name type="ordered locus">PP_1197</name>
</gene>
<reference key="1">
    <citation type="journal article" date="2002" name="Environ. Microbiol.">
        <title>Complete genome sequence and comparative analysis of the metabolically versatile Pseudomonas putida KT2440.</title>
        <authorList>
            <person name="Nelson K.E."/>
            <person name="Weinel C."/>
            <person name="Paulsen I.T."/>
            <person name="Dodson R.J."/>
            <person name="Hilbert H."/>
            <person name="Martins dos Santos V.A.P."/>
            <person name="Fouts D.E."/>
            <person name="Gill S.R."/>
            <person name="Pop M."/>
            <person name="Holmes M."/>
            <person name="Brinkac L.M."/>
            <person name="Beanan M.J."/>
            <person name="DeBoy R.T."/>
            <person name="Daugherty S.C."/>
            <person name="Kolonay J.F."/>
            <person name="Madupu R."/>
            <person name="Nelson W.C."/>
            <person name="White O."/>
            <person name="Peterson J.D."/>
            <person name="Khouri H.M."/>
            <person name="Hance I."/>
            <person name="Chris Lee P."/>
            <person name="Holtzapple E.K."/>
            <person name="Scanlan D."/>
            <person name="Tran K."/>
            <person name="Moazzez A."/>
            <person name="Utterback T.R."/>
            <person name="Rizzo M."/>
            <person name="Lee K."/>
            <person name="Kosack D."/>
            <person name="Moestl D."/>
            <person name="Wedler H."/>
            <person name="Lauber J."/>
            <person name="Stjepandic D."/>
            <person name="Hoheisel J."/>
            <person name="Straetz M."/>
            <person name="Heim S."/>
            <person name="Kiewitz C."/>
            <person name="Eisen J.A."/>
            <person name="Timmis K.N."/>
            <person name="Duesterhoeft A."/>
            <person name="Tuemmler B."/>
            <person name="Fraser C.M."/>
        </authorList>
    </citation>
    <scope>NUCLEOTIDE SEQUENCE [LARGE SCALE GENOMIC DNA]</scope>
    <source>
        <strain>ATCC 47054 / DSM 6125 / CFBP 8728 / NCIMB 11950 / KT2440</strain>
    </source>
</reference>
<comment type="function">
    <text evidence="1">Catalyzes the methylthiolation of an aspartic acid residue of ribosomal protein uS12.</text>
</comment>
<comment type="catalytic activity">
    <reaction evidence="1">
        <text>L-aspartate(89)-[ribosomal protein uS12]-hydrogen + (sulfur carrier)-SH + AH2 + 2 S-adenosyl-L-methionine = 3-methylsulfanyl-L-aspartate(89)-[ribosomal protein uS12]-hydrogen + (sulfur carrier)-H + 5'-deoxyadenosine + L-methionine + A + S-adenosyl-L-homocysteine + 2 H(+)</text>
        <dbReference type="Rhea" id="RHEA:37087"/>
        <dbReference type="Rhea" id="RHEA-COMP:10460"/>
        <dbReference type="Rhea" id="RHEA-COMP:10461"/>
        <dbReference type="Rhea" id="RHEA-COMP:14737"/>
        <dbReference type="Rhea" id="RHEA-COMP:14739"/>
        <dbReference type="ChEBI" id="CHEBI:13193"/>
        <dbReference type="ChEBI" id="CHEBI:15378"/>
        <dbReference type="ChEBI" id="CHEBI:17319"/>
        <dbReference type="ChEBI" id="CHEBI:17499"/>
        <dbReference type="ChEBI" id="CHEBI:29917"/>
        <dbReference type="ChEBI" id="CHEBI:29961"/>
        <dbReference type="ChEBI" id="CHEBI:57844"/>
        <dbReference type="ChEBI" id="CHEBI:57856"/>
        <dbReference type="ChEBI" id="CHEBI:59789"/>
        <dbReference type="ChEBI" id="CHEBI:64428"/>
        <dbReference type="ChEBI" id="CHEBI:73599"/>
        <dbReference type="EC" id="2.8.4.4"/>
    </reaction>
</comment>
<comment type="cofactor">
    <cofactor evidence="1">
        <name>[4Fe-4S] cluster</name>
        <dbReference type="ChEBI" id="CHEBI:49883"/>
    </cofactor>
    <text evidence="1">Binds 2 [4Fe-4S] clusters. One cluster is coordinated with 3 cysteines and an exchangeable S-adenosyl-L-methionine.</text>
</comment>
<comment type="subcellular location">
    <subcellularLocation>
        <location evidence="1">Cytoplasm</location>
    </subcellularLocation>
</comment>
<comment type="similarity">
    <text evidence="1">Belongs to the methylthiotransferase family. RimO subfamily.</text>
</comment>
<comment type="sequence caution" evidence="3">
    <conflict type="erroneous initiation">
        <sequence resource="EMBL-CDS" id="AAN66821"/>
    </conflict>
</comment>
<dbReference type="EC" id="2.8.4.4" evidence="1"/>
<dbReference type="EMBL" id="AE015451">
    <property type="protein sequence ID" value="AAN66821.1"/>
    <property type="status" value="ALT_INIT"/>
    <property type="molecule type" value="Genomic_DNA"/>
</dbReference>
<dbReference type="RefSeq" id="NP_743357.2">
    <property type="nucleotide sequence ID" value="NC_002947.4"/>
</dbReference>
<dbReference type="RefSeq" id="WP_004576169.1">
    <property type="nucleotide sequence ID" value="NZ_CP169744.1"/>
</dbReference>
<dbReference type="SMR" id="Q88NL0"/>
<dbReference type="STRING" id="160488.PP_1197"/>
<dbReference type="PaxDb" id="160488-PP_1197"/>
<dbReference type="GeneID" id="83678560"/>
<dbReference type="KEGG" id="ppu:PP_1197"/>
<dbReference type="PATRIC" id="fig|160488.4.peg.1270"/>
<dbReference type="eggNOG" id="COG0621">
    <property type="taxonomic scope" value="Bacteria"/>
</dbReference>
<dbReference type="HOGENOM" id="CLU_018697_0_0_6"/>
<dbReference type="OrthoDB" id="9805215at2"/>
<dbReference type="BioCyc" id="PPUT160488:G1G01-1279-MONOMER"/>
<dbReference type="Proteomes" id="UP000000556">
    <property type="component" value="Chromosome"/>
</dbReference>
<dbReference type="GO" id="GO:0005829">
    <property type="term" value="C:cytosol"/>
    <property type="evidence" value="ECO:0007669"/>
    <property type="project" value="TreeGrafter"/>
</dbReference>
<dbReference type="GO" id="GO:0051539">
    <property type="term" value="F:4 iron, 4 sulfur cluster binding"/>
    <property type="evidence" value="ECO:0007669"/>
    <property type="project" value="UniProtKB-UniRule"/>
</dbReference>
<dbReference type="GO" id="GO:0035599">
    <property type="term" value="F:aspartic acid methylthiotransferase activity"/>
    <property type="evidence" value="ECO:0007669"/>
    <property type="project" value="TreeGrafter"/>
</dbReference>
<dbReference type="GO" id="GO:0046872">
    <property type="term" value="F:metal ion binding"/>
    <property type="evidence" value="ECO:0007669"/>
    <property type="project" value="UniProtKB-KW"/>
</dbReference>
<dbReference type="GO" id="GO:0103039">
    <property type="term" value="F:protein methylthiotransferase activity"/>
    <property type="evidence" value="ECO:0007669"/>
    <property type="project" value="UniProtKB-EC"/>
</dbReference>
<dbReference type="GO" id="GO:0006400">
    <property type="term" value="P:tRNA modification"/>
    <property type="evidence" value="ECO:0007669"/>
    <property type="project" value="InterPro"/>
</dbReference>
<dbReference type="CDD" id="cd01335">
    <property type="entry name" value="Radical_SAM"/>
    <property type="match status" value="1"/>
</dbReference>
<dbReference type="FunFam" id="2.40.50.140:FF:000060">
    <property type="entry name" value="Ribosomal protein S12 methylthiotransferase RimO"/>
    <property type="match status" value="1"/>
</dbReference>
<dbReference type="FunFam" id="3.40.50.12160:FF:000002">
    <property type="entry name" value="Ribosomal protein S12 methylthiotransferase RimO"/>
    <property type="match status" value="1"/>
</dbReference>
<dbReference type="FunFam" id="3.80.30.20:FF:000001">
    <property type="entry name" value="tRNA-2-methylthio-N(6)-dimethylallyladenosine synthase 2"/>
    <property type="match status" value="1"/>
</dbReference>
<dbReference type="Gene3D" id="3.40.50.12160">
    <property type="entry name" value="Methylthiotransferase, N-terminal domain"/>
    <property type="match status" value="1"/>
</dbReference>
<dbReference type="Gene3D" id="2.40.50.140">
    <property type="entry name" value="Nucleic acid-binding proteins"/>
    <property type="match status" value="1"/>
</dbReference>
<dbReference type="Gene3D" id="3.80.30.20">
    <property type="entry name" value="tm_1862 like domain"/>
    <property type="match status" value="1"/>
</dbReference>
<dbReference type="HAMAP" id="MF_01865">
    <property type="entry name" value="MTTase_RimO"/>
    <property type="match status" value="1"/>
</dbReference>
<dbReference type="InterPro" id="IPR006638">
    <property type="entry name" value="Elp3/MiaA/NifB-like_rSAM"/>
</dbReference>
<dbReference type="InterPro" id="IPR005839">
    <property type="entry name" value="Methylthiotransferase"/>
</dbReference>
<dbReference type="InterPro" id="IPR020612">
    <property type="entry name" value="Methylthiotransferase_CS"/>
</dbReference>
<dbReference type="InterPro" id="IPR013848">
    <property type="entry name" value="Methylthiotransferase_N"/>
</dbReference>
<dbReference type="InterPro" id="IPR038135">
    <property type="entry name" value="Methylthiotransferase_N_sf"/>
</dbReference>
<dbReference type="InterPro" id="IPR012340">
    <property type="entry name" value="NA-bd_OB-fold"/>
</dbReference>
<dbReference type="InterPro" id="IPR005840">
    <property type="entry name" value="Ribosomal_uS12_MeSTrfase_RimO"/>
</dbReference>
<dbReference type="InterPro" id="IPR007197">
    <property type="entry name" value="rSAM"/>
</dbReference>
<dbReference type="InterPro" id="IPR023404">
    <property type="entry name" value="rSAM_horseshoe"/>
</dbReference>
<dbReference type="InterPro" id="IPR002792">
    <property type="entry name" value="TRAM_dom"/>
</dbReference>
<dbReference type="NCBIfam" id="TIGR01125">
    <property type="entry name" value="30S ribosomal protein S12 methylthiotransferase RimO"/>
    <property type="match status" value="1"/>
</dbReference>
<dbReference type="NCBIfam" id="TIGR00089">
    <property type="entry name" value="MiaB/RimO family radical SAM methylthiotransferase"/>
    <property type="match status" value="1"/>
</dbReference>
<dbReference type="PANTHER" id="PTHR43837">
    <property type="entry name" value="RIBOSOMAL PROTEIN S12 METHYLTHIOTRANSFERASE RIMO"/>
    <property type="match status" value="1"/>
</dbReference>
<dbReference type="PANTHER" id="PTHR43837:SF1">
    <property type="entry name" value="RIBOSOMAL PROTEIN US12 METHYLTHIOTRANSFERASE RIMO"/>
    <property type="match status" value="1"/>
</dbReference>
<dbReference type="Pfam" id="PF04055">
    <property type="entry name" value="Radical_SAM"/>
    <property type="match status" value="1"/>
</dbReference>
<dbReference type="Pfam" id="PF18693">
    <property type="entry name" value="TRAM_2"/>
    <property type="match status" value="1"/>
</dbReference>
<dbReference type="Pfam" id="PF00919">
    <property type="entry name" value="UPF0004"/>
    <property type="match status" value="1"/>
</dbReference>
<dbReference type="SFLD" id="SFLDG01082">
    <property type="entry name" value="B12-binding_domain_containing"/>
    <property type="match status" value="1"/>
</dbReference>
<dbReference type="SFLD" id="SFLDS00029">
    <property type="entry name" value="Radical_SAM"/>
    <property type="match status" value="1"/>
</dbReference>
<dbReference type="SFLD" id="SFLDF00274">
    <property type="entry name" value="ribosomal_protein_S12_methylth"/>
    <property type="match status" value="1"/>
</dbReference>
<dbReference type="SMART" id="SM00729">
    <property type="entry name" value="Elp3"/>
    <property type="match status" value="1"/>
</dbReference>
<dbReference type="SUPFAM" id="SSF102114">
    <property type="entry name" value="Radical SAM enzymes"/>
    <property type="match status" value="1"/>
</dbReference>
<dbReference type="PROSITE" id="PS51449">
    <property type="entry name" value="MTTASE_N"/>
    <property type="match status" value="1"/>
</dbReference>
<dbReference type="PROSITE" id="PS01278">
    <property type="entry name" value="MTTASE_RADICAL"/>
    <property type="match status" value="1"/>
</dbReference>
<dbReference type="PROSITE" id="PS51918">
    <property type="entry name" value="RADICAL_SAM"/>
    <property type="match status" value="1"/>
</dbReference>
<dbReference type="PROSITE" id="PS50926">
    <property type="entry name" value="TRAM"/>
    <property type="match status" value="1"/>
</dbReference>
<proteinExistence type="inferred from homology"/>
<feature type="chain" id="PRO_0000374950" description="Ribosomal protein uS12 methylthiotransferase RimO">
    <location>
        <begin position="1"/>
        <end position="443"/>
    </location>
</feature>
<feature type="domain" description="MTTase N-terminal" evidence="1">
    <location>
        <begin position="8"/>
        <end position="118"/>
    </location>
</feature>
<feature type="domain" description="Radical SAM core" evidence="2">
    <location>
        <begin position="137"/>
        <end position="375"/>
    </location>
</feature>
<feature type="domain" description="TRAM" evidence="1">
    <location>
        <begin position="378"/>
        <end position="443"/>
    </location>
</feature>
<feature type="binding site" evidence="1">
    <location>
        <position position="17"/>
    </location>
    <ligand>
        <name>[4Fe-4S] cluster</name>
        <dbReference type="ChEBI" id="CHEBI:49883"/>
        <label>1</label>
    </ligand>
</feature>
<feature type="binding site" evidence="1">
    <location>
        <position position="53"/>
    </location>
    <ligand>
        <name>[4Fe-4S] cluster</name>
        <dbReference type="ChEBI" id="CHEBI:49883"/>
        <label>1</label>
    </ligand>
</feature>
<feature type="binding site" evidence="1">
    <location>
        <position position="82"/>
    </location>
    <ligand>
        <name>[4Fe-4S] cluster</name>
        <dbReference type="ChEBI" id="CHEBI:49883"/>
        <label>1</label>
    </ligand>
</feature>
<feature type="binding site" evidence="1">
    <location>
        <position position="151"/>
    </location>
    <ligand>
        <name>[4Fe-4S] cluster</name>
        <dbReference type="ChEBI" id="CHEBI:49883"/>
        <label>2</label>
        <note>4Fe-4S-S-AdoMet</note>
    </ligand>
</feature>
<feature type="binding site" evidence="1">
    <location>
        <position position="155"/>
    </location>
    <ligand>
        <name>[4Fe-4S] cluster</name>
        <dbReference type="ChEBI" id="CHEBI:49883"/>
        <label>2</label>
        <note>4Fe-4S-S-AdoMet</note>
    </ligand>
</feature>
<feature type="binding site" evidence="1">
    <location>
        <position position="158"/>
    </location>
    <ligand>
        <name>[4Fe-4S] cluster</name>
        <dbReference type="ChEBI" id="CHEBI:49883"/>
        <label>2</label>
        <note>4Fe-4S-S-AdoMet</note>
    </ligand>
</feature>
<sequence length="443" mass="49321">MSTTPATPKVGFVSLGCPKALVDSERILTQLRMEGYEVVPTYEDADVVVVNTCGFIDSAKAESLEVIGEAIKENGKVIVTGCMGVEEGSIRDVHPSVLSVTGPQQYEQVVNAVHEVVPPRQDHNPLIDLVPPQGVKLTPRHYAYLKISEGCNHSCSFCIIPSMRGKLVSRPVGEVLSEAERLVKAGVKEILVISQDTSAYGVDVKYKTDFWNGRPVKTRMLELCEALSSLGAWVRLHYVYPYPNVDDVIPLMAAGKILPYLDIPFQHASPKVLKSMKRPAFEDRTLARIKNWREQCPELVIRSTFIVGFPGETEEDFQYLLDWLTEAQLDRVGCFQYSPVEGAPANDLGLAEVPDDVKQERWDRFMAHQQAISAARLQLRIGKEIDVLIDEVEEQGSVGRSFFDAPEIDGSVFIDGDHGFKPGDKVRCRVVDADEYDMWAEPI</sequence>
<protein>
    <recommendedName>
        <fullName evidence="1">Ribosomal protein uS12 methylthiotransferase RimO</fullName>
        <shortName evidence="1">uS12 MTTase</shortName>
        <shortName evidence="1">uS12 methylthiotransferase</shortName>
        <ecNumber evidence="1">2.8.4.4</ecNumber>
    </recommendedName>
    <alternativeName>
        <fullName evidence="1">Ribosomal protein uS12 (aspartate-C(3))-methylthiotransferase</fullName>
    </alternativeName>
    <alternativeName>
        <fullName evidence="1">Ribosome maturation factor RimO</fullName>
    </alternativeName>
</protein>
<accession>Q88NL0</accession>